<keyword id="KW-0507">mRNA processing</keyword>
<keyword id="KW-0508">mRNA splicing</keyword>
<keyword id="KW-0539">Nucleus</keyword>
<keyword id="KW-1185">Reference proteome</keyword>
<keyword id="KW-0677">Repeat</keyword>
<keyword id="KW-0747">Spliceosome</keyword>
<organism>
    <name type="scientific">Aspergillus fumigatus (strain ATCC MYA-4609 / CBS 101355 / FGSC A1100 / Af293)</name>
    <name type="common">Neosartorya fumigata</name>
    <dbReference type="NCBI Taxonomy" id="330879"/>
    <lineage>
        <taxon>Eukaryota</taxon>
        <taxon>Fungi</taxon>
        <taxon>Dikarya</taxon>
        <taxon>Ascomycota</taxon>
        <taxon>Pezizomycotina</taxon>
        <taxon>Eurotiomycetes</taxon>
        <taxon>Eurotiomycetidae</taxon>
        <taxon>Eurotiales</taxon>
        <taxon>Aspergillaceae</taxon>
        <taxon>Aspergillus</taxon>
        <taxon>Aspergillus subgen. Fumigati</taxon>
    </lineage>
</organism>
<evidence type="ECO:0000250" key="1"/>
<evidence type="ECO:0000256" key="2">
    <source>
        <dbReference type="SAM" id="MobiDB-lite"/>
    </source>
</evidence>
<evidence type="ECO:0000305" key="3"/>
<proteinExistence type="inferred from homology"/>
<protein>
    <recommendedName>
        <fullName>Pre-mRNA-splicing factor clf1</fullName>
    </recommendedName>
</protein>
<comment type="function">
    <text evidence="1">Involved in pre-mRNA splicing and cell cycle progression. Required for the spliceosome assembly and initiation of the DNA replication (By similarity).</text>
</comment>
<comment type="subunit">
    <text evidence="1">Associated with the spliceosome.</text>
</comment>
<comment type="subcellular location">
    <subcellularLocation>
        <location evidence="1">Nucleus</location>
    </subcellularLocation>
</comment>
<comment type="similarity">
    <text evidence="3">Belongs to the crooked-neck family.</text>
</comment>
<feature type="chain" id="PRO_0000205739" description="Pre-mRNA-splicing factor clf1">
    <location>
        <begin position="1"/>
        <end position="676"/>
    </location>
</feature>
<feature type="repeat" description="HAT 1">
    <location>
        <begin position="52"/>
        <end position="84"/>
    </location>
</feature>
<feature type="repeat" description="HAT 2">
    <location>
        <begin position="86"/>
        <end position="118"/>
    </location>
</feature>
<feature type="repeat" description="HAT 3">
    <location>
        <begin position="120"/>
        <end position="152"/>
    </location>
</feature>
<feature type="repeat" description="HAT 4">
    <location>
        <begin position="154"/>
        <end position="185"/>
    </location>
</feature>
<feature type="repeat" description="HAT 5">
    <location>
        <begin position="187"/>
        <end position="218"/>
    </location>
</feature>
<feature type="repeat" description="HAT 6">
    <location>
        <begin position="220"/>
        <end position="255"/>
    </location>
</feature>
<feature type="repeat" description="HAT 7">
    <location>
        <begin position="257"/>
        <end position="291"/>
    </location>
</feature>
<feature type="repeat" description="HAT 8">
    <location>
        <begin position="301"/>
        <end position="333"/>
    </location>
</feature>
<feature type="repeat" description="HAT 9">
    <location>
        <begin position="335"/>
        <end position="369"/>
    </location>
</feature>
<feature type="repeat" description="HAT 10">
    <location>
        <begin position="379"/>
        <end position="415"/>
    </location>
</feature>
<feature type="repeat" description="HAT 11">
    <location>
        <begin position="417"/>
        <end position="448"/>
    </location>
</feature>
<feature type="repeat" description="HAT 12">
    <location>
        <begin position="450"/>
        <end position="482"/>
    </location>
</feature>
<feature type="repeat" description="HAT 13">
    <location>
        <begin position="484"/>
        <end position="518"/>
    </location>
</feature>
<feature type="repeat" description="HAT 14">
    <location>
        <begin position="520"/>
        <end position="551"/>
    </location>
</feature>
<feature type="repeat" description="HAT 15">
    <location>
        <begin position="572"/>
        <end position="610"/>
    </location>
</feature>
<feature type="region of interest" description="Disordered" evidence="2">
    <location>
        <begin position="554"/>
        <end position="573"/>
    </location>
</feature>
<feature type="compositionally biased region" description="Acidic residues" evidence="2">
    <location>
        <begin position="554"/>
        <end position="566"/>
    </location>
</feature>
<dbReference type="EMBL" id="AAHF01000004">
    <property type="protein sequence ID" value="EAL90348.1"/>
    <property type="molecule type" value="Genomic_DNA"/>
</dbReference>
<dbReference type="RefSeq" id="XP_752386.1">
    <property type="nucleotide sequence ID" value="XM_747293.1"/>
</dbReference>
<dbReference type="SMR" id="Q4WT84"/>
<dbReference type="FunCoup" id="Q4WT84">
    <property type="interactions" value="1057"/>
</dbReference>
<dbReference type="STRING" id="330879.Q4WT84"/>
<dbReference type="EnsemblFungi" id="EAL90348">
    <property type="protein sequence ID" value="EAL90348"/>
    <property type="gene ID" value="AFUA_1G10200"/>
</dbReference>
<dbReference type="GeneID" id="3510367"/>
<dbReference type="KEGG" id="afm:AFUA_1G10200"/>
<dbReference type="VEuPathDB" id="FungiDB:Afu1g10200"/>
<dbReference type="eggNOG" id="KOG1915">
    <property type="taxonomic scope" value="Eukaryota"/>
</dbReference>
<dbReference type="HOGENOM" id="CLU_011554_1_0_1"/>
<dbReference type="InParanoid" id="Q4WT84"/>
<dbReference type="OMA" id="HIKVWIS"/>
<dbReference type="OrthoDB" id="541719at2759"/>
<dbReference type="Proteomes" id="UP000002530">
    <property type="component" value="Chromosome 1"/>
</dbReference>
<dbReference type="GO" id="GO:0071014">
    <property type="term" value="C:post-mRNA release spliceosomal complex"/>
    <property type="evidence" value="ECO:0000318"/>
    <property type="project" value="GO_Central"/>
</dbReference>
<dbReference type="GO" id="GO:0000974">
    <property type="term" value="C:Prp19 complex"/>
    <property type="evidence" value="ECO:0000318"/>
    <property type="project" value="GO_Central"/>
</dbReference>
<dbReference type="GO" id="GO:0071007">
    <property type="term" value="C:U2-type catalytic step 2 spliceosome"/>
    <property type="evidence" value="ECO:0000318"/>
    <property type="project" value="GO_Central"/>
</dbReference>
<dbReference type="GO" id="GO:0000398">
    <property type="term" value="P:mRNA splicing, via spliceosome"/>
    <property type="evidence" value="ECO:0000318"/>
    <property type="project" value="GO_Central"/>
</dbReference>
<dbReference type="GO" id="GO:0000245">
    <property type="term" value="P:spliceosomal complex assembly"/>
    <property type="evidence" value="ECO:0000318"/>
    <property type="project" value="GO_Central"/>
</dbReference>
<dbReference type="FunFam" id="1.25.40.10:FF:000048">
    <property type="entry name" value="Cell cycle control protein"/>
    <property type="match status" value="1"/>
</dbReference>
<dbReference type="FunFam" id="1.25.40.10:FF:000254">
    <property type="entry name" value="Cell cycle control protein"/>
    <property type="match status" value="1"/>
</dbReference>
<dbReference type="FunFam" id="1.25.40.10:FF:000306">
    <property type="entry name" value="Cell cycle control protein cwf4"/>
    <property type="match status" value="1"/>
</dbReference>
<dbReference type="Gene3D" id="1.25.40.10">
    <property type="entry name" value="Tetratricopeptide repeat domain"/>
    <property type="match status" value="3"/>
</dbReference>
<dbReference type="InterPro" id="IPR003107">
    <property type="entry name" value="HAT"/>
</dbReference>
<dbReference type="InterPro" id="IPR055433">
    <property type="entry name" value="HAT_Syf1-like_N"/>
</dbReference>
<dbReference type="InterPro" id="IPR055430">
    <property type="entry name" value="HAT_Syf1_CNRKL1_C"/>
</dbReference>
<dbReference type="InterPro" id="IPR045075">
    <property type="entry name" value="Syf1-like"/>
</dbReference>
<dbReference type="InterPro" id="IPR011990">
    <property type="entry name" value="TPR-like_helical_dom_sf"/>
</dbReference>
<dbReference type="InterPro" id="IPR019734">
    <property type="entry name" value="TPR_rpt"/>
</dbReference>
<dbReference type="PANTHER" id="PTHR11246:SF3">
    <property type="entry name" value="CROOKED NECK-LIKE PROTEIN 1"/>
    <property type="match status" value="1"/>
</dbReference>
<dbReference type="PANTHER" id="PTHR11246">
    <property type="entry name" value="PRE-MRNA SPLICING FACTOR"/>
    <property type="match status" value="1"/>
</dbReference>
<dbReference type="Pfam" id="PF23231">
    <property type="entry name" value="HAT_Syf1_CNRKL1_C"/>
    <property type="match status" value="2"/>
</dbReference>
<dbReference type="Pfam" id="PF23233">
    <property type="entry name" value="HAT_Syf1_CNRKL1_N"/>
    <property type="match status" value="1"/>
</dbReference>
<dbReference type="SMART" id="SM00386">
    <property type="entry name" value="HAT"/>
    <property type="match status" value="15"/>
</dbReference>
<dbReference type="SUPFAM" id="SSF48452">
    <property type="entry name" value="TPR-like"/>
    <property type="match status" value="2"/>
</dbReference>
<sequence length="676" mass="81970">MESSRGPPRVKNKAPAPIQISAEQLLREAVDRQEPALQAPTQRFADLEELHEYQGRKRKEFEDYVRRNRLNMNNWMRYASWELEQKEFRRARSIFERALDVNPTSVVLWIRYIESEMRNRNINHARNLLDRAVTILPRVDKFWYKYVYMEETLGNIQGTRQVFERWMSWEPDEGAWSAYIKLEKRYNEFERARAIFQRFTIVHPEPRNWIKWARFEEEYGTSDLVREVYGMAIETLGEDFMDEKLFIAYAKFEAKLKEYERARAIYKYALDRLPRSKAMALHKAYTTFEKQFGDREGVEDVILSKRRVQYEEQLKENPRNYDVWFDFARLEETSGDPDRVRDIYERAIAQIPPSQEKRHWRRYIYLWIFYAIWEEMEAKDVDRARQIYTECLKLIPHKKFTFAKIWLLKAQFDIRQMDLQAARKTLGQAIGMCPKDKLFRGYIDLERQLFEFVRCRTLYEKQIEWNPANSQSWIKYAELERGLDDSERARAIFELGIDQPMLDMPELVWKAYIDFEEYEGEYDRVRQLYERLLQKTDHVKVWINYARFEINVPEEEEEEEEEEEEERPVSDEAKRRARAVFERAHKVFKEKEMKEERVELLNAWRAFEHTHGSPEDIKKIEEQMPRRVKKRRKLDDDRYEEYMDYVFPADDQAAASLTKILQAAHRWKQTGGQVVP</sequence>
<accession>Q4WT84</accession>
<gene>
    <name type="primary">clf1</name>
    <name type="ORF">AFUA_1G10200</name>
</gene>
<name>CLF1_ASPFU</name>
<reference key="1">
    <citation type="journal article" date="2005" name="Nature">
        <title>Genomic sequence of the pathogenic and allergenic filamentous fungus Aspergillus fumigatus.</title>
        <authorList>
            <person name="Nierman W.C."/>
            <person name="Pain A."/>
            <person name="Anderson M.J."/>
            <person name="Wortman J.R."/>
            <person name="Kim H.S."/>
            <person name="Arroyo J."/>
            <person name="Berriman M."/>
            <person name="Abe K."/>
            <person name="Archer D.B."/>
            <person name="Bermejo C."/>
            <person name="Bennett J.W."/>
            <person name="Bowyer P."/>
            <person name="Chen D."/>
            <person name="Collins M."/>
            <person name="Coulsen R."/>
            <person name="Davies R."/>
            <person name="Dyer P.S."/>
            <person name="Farman M.L."/>
            <person name="Fedorova N."/>
            <person name="Fedorova N.D."/>
            <person name="Feldblyum T.V."/>
            <person name="Fischer R."/>
            <person name="Fosker N."/>
            <person name="Fraser A."/>
            <person name="Garcia J.L."/>
            <person name="Garcia M.J."/>
            <person name="Goble A."/>
            <person name="Goldman G.H."/>
            <person name="Gomi K."/>
            <person name="Griffith-Jones S."/>
            <person name="Gwilliam R."/>
            <person name="Haas B.J."/>
            <person name="Haas H."/>
            <person name="Harris D.E."/>
            <person name="Horiuchi H."/>
            <person name="Huang J."/>
            <person name="Humphray S."/>
            <person name="Jimenez J."/>
            <person name="Keller N."/>
            <person name="Khouri H."/>
            <person name="Kitamoto K."/>
            <person name="Kobayashi T."/>
            <person name="Konzack S."/>
            <person name="Kulkarni R."/>
            <person name="Kumagai T."/>
            <person name="Lafton A."/>
            <person name="Latge J.-P."/>
            <person name="Li W."/>
            <person name="Lord A."/>
            <person name="Lu C."/>
            <person name="Majoros W.H."/>
            <person name="May G.S."/>
            <person name="Miller B.L."/>
            <person name="Mohamoud Y."/>
            <person name="Molina M."/>
            <person name="Monod M."/>
            <person name="Mouyna I."/>
            <person name="Mulligan S."/>
            <person name="Murphy L.D."/>
            <person name="O'Neil S."/>
            <person name="Paulsen I."/>
            <person name="Penalva M.A."/>
            <person name="Pertea M."/>
            <person name="Price C."/>
            <person name="Pritchard B.L."/>
            <person name="Quail M.A."/>
            <person name="Rabbinowitsch E."/>
            <person name="Rawlins N."/>
            <person name="Rajandream M.A."/>
            <person name="Reichard U."/>
            <person name="Renauld H."/>
            <person name="Robson G.D."/>
            <person name="Rodriguez de Cordoba S."/>
            <person name="Rodriguez-Pena J.M."/>
            <person name="Ronning C.M."/>
            <person name="Rutter S."/>
            <person name="Salzberg S.L."/>
            <person name="Sanchez M."/>
            <person name="Sanchez-Ferrero J.C."/>
            <person name="Saunders D."/>
            <person name="Seeger K."/>
            <person name="Squares R."/>
            <person name="Squares S."/>
            <person name="Takeuchi M."/>
            <person name="Tekaia F."/>
            <person name="Turner G."/>
            <person name="Vazquez de Aldana C.R."/>
            <person name="Weidman J."/>
            <person name="White O."/>
            <person name="Woodward J.R."/>
            <person name="Yu J.-H."/>
            <person name="Fraser C.M."/>
            <person name="Galagan J.E."/>
            <person name="Asai K."/>
            <person name="Machida M."/>
            <person name="Hall N."/>
            <person name="Barrell B.G."/>
            <person name="Denning D.W."/>
        </authorList>
    </citation>
    <scope>NUCLEOTIDE SEQUENCE [LARGE SCALE GENOMIC DNA]</scope>
    <source>
        <strain>ATCC MYA-4609 / CBS 101355 / FGSC A1100 / Af293</strain>
    </source>
</reference>